<protein>
    <recommendedName>
        <fullName evidence="1">dCTP deaminase, dUMP-forming</fullName>
        <ecNumber evidence="1">3.5.4.30</ecNumber>
    </recommendedName>
    <alternativeName>
        <fullName evidence="1">Bifunctional dCTP deaminase:dUTPase</fullName>
    </alternativeName>
    <alternativeName>
        <fullName evidence="1">DCD-DUT</fullName>
    </alternativeName>
</protein>
<keyword id="KW-0378">Hydrolase</keyword>
<keyword id="KW-0546">Nucleotide metabolism</keyword>
<keyword id="KW-0547">Nucleotide-binding</keyword>
<sequence length="190" mass="20802">MLLSDRDIRAEITAGRLGVDPFDDSLVQPSSVDVRLDNLFRVFNNTRYTHIDPAQRQDDLTSLVEPKEGEPFVLHPGEFVLGATLERCTLPDDLAGRLEGKSSLGRLGLLTHSTAGFIDPGFSGHITLELSNVANLPITLWPGMKIGQLCLLRLTSPAEHPYGSSSVGSKYQGQRGPTPSRSYQNFVKND</sequence>
<organism>
    <name type="scientific">Mycolicibacterium vanbaalenii (strain DSM 7251 / JCM 13017 / BCRC 16820 / KCTC 9966 / NRRL B-24157 / PYR-1)</name>
    <name type="common">Mycobacterium vanbaalenii</name>
    <dbReference type="NCBI Taxonomy" id="350058"/>
    <lineage>
        <taxon>Bacteria</taxon>
        <taxon>Bacillati</taxon>
        <taxon>Actinomycetota</taxon>
        <taxon>Actinomycetes</taxon>
        <taxon>Mycobacteriales</taxon>
        <taxon>Mycobacteriaceae</taxon>
        <taxon>Mycolicibacterium</taxon>
    </lineage>
</organism>
<dbReference type="EC" id="3.5.4.30" evidence="1"/>
<dbReference type="EMBL" id="CP000511">
    <property type="protein sequence ID" value="ABM11428.1"/>
    <property type="molecule type" value="Genomic_DNA"/>
</dbReference>
<dbReference type="RefSeq" id="WP_011777865.1">
    <property type="nucleotide sequence ID" value="NZ_JACKSD010000285.1"/>
</dbReference>
<dbReference type="SMR" id="A1T2M8"/>
<dbReference type="STRING" id="350058.Mvan_0589"/>
<dbReference type="KEGG" id="mva:Mvan_0589"/>
<dbReference type="eggNOG" id="COG0717">
    <property type="taxonomic scope" value="Bacteria"/>
</dbReference>
<dbReference type="HOGENOM" id="CLU_087476_2_0_11"/>
<dbReference type="UniPathway" id="UPA00610">
    <property type="reaction ID" value="UER00667"/>
</dbReference>
<dbReference type="Proteomes" id="UP000009159">
    <property type="component" value="Chromosome"/>
</dbReference>
<dbReference type="GO" id="GO:0033973">
    <property type="term" value="F:dCTP deaminase (dUMP-forming) activity"/>
    <property type="evidence" value="ECO:0007669"/>
    <property type="project" value="UniProtKB-UniRule"/>
</dbReference>
<dbReference type="GO" id="GO:0008829">
    <property type="term" value="F:dCTP deaminase activity"/>
    <property type="evidence" value="ECO:0007669"/>
    <property type="project" value="InterPro"/>
</dbReference>
<dbReference type="GO" id="GO:0000166">
    <property type="term" value="F:nucleotide binding"/>
    <property type="evidence" value="ECO:0007669"/>
    <property type="project" value="UniProtKB-KW"/>
</dbReference>
<dbReference type="GO" id="GO:0006226">
    <property type="term" value="P:dUMP biosynthetic process"/>
    <property type="evidence" value="ECO:0007669"/>
    <property type="project" value="UniProtKB-UniRule"/>
</dbReference>
<dbReference type="GO" id="GO:0006229">
    <property type="term" value="P:dUTP biosynthetic process"/>
    <property type="evidence" value="ECO:0007669"/>
    <property type="project" value="InterPro"/>
</dbReference>
<dbReference type="GO" id="GO:0015949">
    <property type="term" value="P:nucleobase-containing small molecule interconversion"/>
    <property type="evidence" value="ECO:0007669"/>
    <property type="project" value="TreeGrafter"/>
</dbReference>
<dbReference type="CDD" id="cd07557">
    <property type="entry name" value="trimeric_dUTPase"/>
    <property type="match status" value="1"/>
</dbReference>
<dbReference type="FunFam" id="2.70.40.10:FF:000005">
    <property type="entry name" value="dCTP deaminase, dUMP-forming"/>
    <property type="match status" value="1"/>
</dbReference>
<dbReference type="Gene3D" id="2.70.40.10">
    <property type="match status" value="1"/>
</dbReference>
<dbReference type="HAMAP" id="MF_00146">
    <property type="entry name" value="dCTP_deaminase"/>
    <property type="match status" value="1"/>
</dbReference>
<dbReference type="InterPro" id="IPR011962">
    <property type="entry name" value="dCTP_deaminase"/>
</dbReference>
<dbReference type="InterPro" id="IPR036157">
    <property type="entry name" value="dUTPase-like_sf"/>
</dbReference>
<dbReference type="InterPro" id="IPR033704">
    <property type="entry name" value="dUTPase_trimeric"/>
</dbReference>
<dbReference type="NCBIfam" id="TIGR02274">
    <property type="entry name" value="dCTP_deam"/>
    <property type="match status" value="1"/>
</dbReference>
<dbReference type="PANTHER" id="PTHR42680">
    <property type="entry name" value="DCTP DEAMINASE"/>
    <property type="match status" value="1"/>
</dbReference>
<dbReference type="PANTHER" id="PTHR42680:SF3">
    <property type="entry name" value="DCTP DEAMINASE"/>
    <property type="match status" value="1"/>
</dbReference>
<dbReference type="Pfam" id="PF22769">
    <property type="entry name" value="DCD"/>
    <property type="match status" value="1"/>
</dbReference>
<dbReference type="SUPFAM" id="SSF51283">
    <property type="entry name" value="dUTPase-like"/>
    <property type="match status" value="1"/>
</dbReference>
<name>DCDB_MYCVP</name>
<reference key="1">
    <citation type="submission" date="2006-12" db="EMBL/GenBank/DDBJ databases">
        <title>Complete sequence of Mycobacterium vanbaalenii PYR-1.</title>
        <authorList>
            <consortium name="US DOE Joint Genome Institute"/>
            <person name="Copeland A."/>
            <person name="Lucas S."/>
            <person name="Lapidus A."/>
            <person name="Barry K."/>
            <person name="Detter J.C."/>
            <person name="Glavina del Rio T."/>
            <person name="Hammon N."/>
            <person name="Israni S."/>
            <person name="Dalin E."/>
            <person name="Tice H."/>
            <person name="Pitluck S."/>
            <person name="Singan V."/>
            <person name="Schmutz J."/>
            <person name="Larimer F."/>
            <person name="Land M."/>
            <person name="Hauser L."/>
            <person name="Kyrpides N."/>
            <person name="Anderson I.J."/>
            <person name="Miller C."/>
            <person name="Richardson P."/>
        </authorList>
    </citation>
    <scope>NUCLEOTIDE SEQUENCE [LARGE SCALE GENOMIC DNA]</scope>
    <source>
        <strain>DSM 7251 / JCM 13017 / BCRC 16820 / KCTC 9966 / NRRL B-24157 / PYR-1</strain>
    </source>
</reference>
<comment type="function">
    <text evidence="1">Bifunctional enzyme that catalyzes both the deamination of dCTP to dUTP and the hydrolysis of dUTP to dUMP without releasing the toxic dUTP intermediate.</text>
</comment>
<comment type="catalytic activity">
    <reaction evidence="1">
        <text>dCTP + 2 H2O = dUMP + NH4(+) + diphosphate</text>
        <dbReference type="Rhea" id="RHEA:19205"/>
        <dbReference type="ChEBI" id="CHEBI:15377"/>
        <dbReference type="ChEBI" id="CHEBI:28938"/>
        <dbReference type="ChEBI" id="CHEBI:33019"/>
        <dbReference type="ChEBI" id="CHEBI:61481"/>
        <dbReference type="ChEBI" id="CHEBI:246422"/>
        <dbReference type="EC" id="3.5.4.30"/>
    </reaction>
</comment>
<comment type="pathway">
    <text evidence="1">Pyrimidine metabolism; dUMP biosynthesis; dUMP from dCTP: step 1/1.</text>
</comment>
<comment type="subunit">
    <text evidence="1">Homotrimer.</text>
</comment>
<comment type="similarity">
    <text evidence="1">Belongs to the dCTP deaminase family.</text>
</comment>
<gene>
    <name evidence="1" type="primary">dcd</name>
    <name type="ordered locus">Mvan_0589</name>
</gene>
<evidence type="ECO:0000255" key="1">
    <source>
        <dbReference type="HAMAP-Rule" id="MF_00146"/>
    </source>
</evidence>
<evidence type="ECO:0000256" key="2">
    <source>
        <dbReference type="SAM" id="MobiDB-lite"/>
    </source>
</evidence>
<accession>A1T2M8</accession>
<feature type="chain" id="PRO_1000009765" description="dCTP deaminase, dUMP-forming">
    <location>
        <begin position="1"/>
        <end position="190"/>
    </location>
</feature>
<feature type="region of interest" description="Disordered" evidence="2">
    <location>
        <begin position="161"/>
        <end position="190"/>
    </location>
</feature>
<feature type="compositionally biased region" description="Polar residues" evidence="2">
    <location>
        <begin position="163"/>
        <end position="190"/>
    </location>
</feature>
<feature type="active site" description="Proton donor/acceptor" evidence="1">
    <location>
        <position position="129"/>
    </location>
</feature>
<feature type="binding site" evidence="1">
    <location>
        <begin position="101"/>
        <end position="106"/>
    </location>
    <ligand>
        <name>dCTP</name>
        <dbReference type="ChEBI" id="CHEBI:61481"/>
    </ligand>
</feature>
<feature type="binding site" evidence="1">
    <location>
        <position position="119"/>
    </location>
    <ligand>
        <name>dCTP</name>
        <dbReference type="ChEBI" id="CHEBI:61481"/>
    </ligand>
</feature>
<feature type="binding site" evidence="1">
    <location>
        <begin position="127"/>
        <end position="129"/>
    </location>
    <ligand>
        <name>dCTP</name>
        <dbReference type="ChEBI" id="CHEBI:61481"/>
    </ligand>
</feature>
<feature type="binding site" evidence="1">
    <location>
        <position position="148"/>
    </location>
    <ligand>
        <name>dCTP</name>
        <dbReference type="ChEBI" id="CHEBI:61481"/>
    </ligand>
</feature>
<feature type="binding site" evidence="1">
    <location>
        <position position="162"/>
    </location>
    <ligand>
        <name>dCTP</name>
        <dbReference type="ChEBI" id="CHEBI:61481"/>
    </ligand>
</feature>
<feature type="binding site" evidence="1">
    <location>
        <position position="174"/>
    </location>
    <ligand>
        <name>dCTP</name>
        <dbReference type="ChEBI" id="CHEBI:61481"/>
    </ligand>
</feature>
<feature type="site" description="Important for bifunctional activity" evidence="1">
    <location>
        <begin position="116"/>
        <end position="117"/>
    </location>
</feature>
<proteinExistence type="inferred from homology"/>